<name>PRIB_HAEIE</name>
<keyword id="KW-0235">DNA replication</keyword>
<keyword id="KW-0238">DNA-binding</keyword>
<keyword id="KW-0639">Primosome</keyword>
<evidence type="ECO:0000255" key="1">
    <source>
        <dbReference type="HAMAP-Rule" id="MF_00720"/>
    </source>
</evidence>
<comment type="function">
    <text evidence="1">Involved in the restart of stalled replication forks, which reloads the replicative helicase on sites other than the origin of replication; the PriA-PriB pathway is the major replication restart pathway. During primosome assembly it facilitates complex formation between PriA and DnaT on DNA; stabilizes PriA on DNA. Stimulates the DNA unwinding activity of PriA helicase.</text>
</comment>
<comment type="subunit">
    <text evidence="1">Homodimer. Interacts with PriA and DnaT. Component of the replication restart primosome. Primosome assembly occurs via a 'hand-off' mechanism. PriA binds to replication forks, subsequently PriB then DnaT bind; DnaT then displaces ssDNA to generate the helicase loading substrate.</text>
</comment>
<comment type="similarity">
    <text evidence="1">Belongs to the PriB family.</text>
</comment>
<feature type="chain" id="PRO_1000083282" description="Replication restart protein PriB">
    <location>
        <begin position="1"/>
        <end position="108"/>
    </location>
</feature>
<feature type="domain" description="SSB" evidence="1">
    <location>
        <begin position="8"/>
        <end position="108"/>
    </location>
</feature>
<gene>
    <name evidence="1" type="primary">priB</name>
    <name type="ordered locus">CGSHiEE_00260</name>
</gene>
<protein>
    <recommendedName>
        <fullName evidence="1">Replication restart protein PriB</fullName>
    </recommendedName>
</protein>
<reference key="1">
    <citation type="journal article" date="2007" name="Genome Biol.">
        <title>Characterization and modeling of the Haemophilus influenzae core and supragenomes based on the complete genomic sequences of Rd and 12 clinical nontypeable strains.</title>
        <authorList>
            <person name="Hogg J.S."/>
            <person name="Hu F.Z."/>
            <person name="Janto B."/>
            <person name="Boissy R."/>
            <person name="Hayes J."/>
            <person name="Keefe R."/>
            <person name="Post J.C."/>
            <person name="Ehrlich G.D."/>
        </authorList>
    </citation>
    <scope>NUCLEOTIDE SEQUENCE [LARGE SCALE GENOMIC DNA]</scope>
    <source>
        <strain>PittEE</strain>
    </source>
</reference>
<proteinExistence type="inferred from homology"/>
<dbReference type="EMBL" id="CP000671">
    <property type="protein sequence ID" value="ABQ97550.1"/>
    <property type="molecule type" value="Genomic_DNA"/>
</dbReference>
<dbReference type="SMR" id="A5U9U9"/>
<dbReference type="KEGG" id="hip:CGSHiEE_00260"/>
<dbReference type="HOGENOM" id="CLU_166075_0_0_6"/>
<dbReference type="GO" id="GO:1990077">
    <property type="term" value="C:primosome complex"/>
    <property type="evidence" value="ECO:0007669"/>
    <property type="project" value="UniProtKB-KW"/>
</dbReference>
<dbReference type="GO" id="GO:0003697">
    <property type="term" value="F:single-stranded DNA binding"/>
    <property type="evidence" value="ECO:0007669"/>
    <property type="project" value="UniProtKB-UniRule"/>
</dbReference>
<dbReference type="GO" id="GO:0006269">
    <property type="term" value="P:DNA replication, synthesis of primer"/>
    <property type="evidence" value="ECO:0007669"/>
    <property type="project" value="UniProtKB-KW"/>
</dbReference>
<dbReference type="Gene3D" id="2.40.50.140">
    <property type="entry name" value="Nucleic acid-binding proteins"/>
    <property type="match status" value="1"/>
</dbReference>
<dbReference type="HAMAP" id="MF_00720">
    <property type="entry name" value="PriB"/>
    <property type="match status" value="1"/>
</dbReference>
<dbReference type="InterPro" id="IPR012340">
    <property type="entry name" value="NA-bd_OB-fold"/>
</dbReference>
<dbReference type="InterPro" id="IPR000424">
    <property type="entry name" value="Primosome_PriB/ssb"/>
</dbReference>
<dbReference type="InterPro" id="IPR023646">
    <property type="entry name" value="Prisomal_replication_PriB"/>
</dbReference>
<dbReference type="NCBIfam" id="TIGR04418">
    <property type="entry name" value="PriB_gamma"/>
    <property type="match status" value="1"/>
</dbReference>
<dbReference type="Pfam" id="PF22657">
    <property type="entry name" value="SSB_1"/>
    <property type="match status" value="1"/>
</dbReference>
<dbReference type="PIRSF" id="PIRSF003135">
    <property type="entry name" value="Primosomal_n"/>
    <property type="match status" value="1"/>
</dbReference>
<dbReference type="SUPFAM" id="SSF50249">
    <property type="entry name" value="Nucleic acid-binding proteins"/>
    <property type="match status" value="1"/>
</dbReference>
<dbReference type="PROSITE" id="PS50935">
    <property type="entry name" value="SSB"/>
    <property type="match status" value="1"/>
</dbReference>
<accession>A5U9U9</accession>
<sequence>MLKSNLKIDNRFSVMGVVSQLPKRLKSPSGIEHCKFLLEHRSDQIESGFTRQAWLKMPVQISGNQLIEKTQSITVGSKILVVGFITSHKTQSGLCQLVLHAEQIEFID</sequence>
<organism>
    <name type="scientific">Haemophilus influenzae (strain PittEE)</name>
    <dbReference type="NCBI Taxonomy" id="374930"/>
    <lineage>
        <taxon>Bacteria</taxon>
        <taxon>Pseudomonadati</taxon>
        <taxon>Pseudomonadota</taxon>
        <taxon>Gammaproteobacteria</taxon>
        <taxon>Pasteurellales</taxon>
        <taxon>Pasteurellaceae</taxon>
        <taxon>Haemophilus</taxon>
    </lineage>
</organism>